<protein>
    <recommendedName>
        <fullName evidence="1">Ribosomal RNA large subunit methyltransferase G</fullName>
        <ecNumber evidence="1">2.1.1.174</ecNumber>
    </recommendedName>
    <alternativeName>
        <fullName evidence="1">23S rRNA m2G1835 methyltransferase</fullName>
    </alternativeName>
    <alternativeName>
        <fullName evidence="1">rRNA (guanine-N(2)-)-methyltransferase RlmG</fullName>
    </alternativeName>
</protein>
<keyword id="KW-0963">Cytoplasm</keyword>
<keyword id="KW-0489">Methyltransferase</keyword>
<keyword id="KW-1185">Reference proteome</keyword>
<keyword id="KW-0698">rRNA processing</keyword>
<keyword id="KW-0949">S-adenosyl-L-methionine</keyword>
<keyword id="KW-0808">Transferase</keyword>
<name>RLMG_PHOPR</name>
<accession>Q6LTZ3</accession>
<reference key="1">
    <citation type="journal article" date="2005" name="Science">
        <title>Life at depth: Photobacterium profundum genome sequence and expression analysis.</title>
        <authorList>
            <person name="Vezzi A."/>
            <person name="Campanaro S."/>
            <person name="D'Angelo M."/>
            <person name="Simonato F."/>
            <person name="Vitulo N."/>
            <person name="Lauro F.M."/>
            <person name="Cestaro A."/>
            <person name="Malacrida G."/>
            <person name="Simionati B."/>
            <person name="Cannata N."/>
            <person name="Romualdi C."/>
            <person name="Bartlett D.H."/>
            <person name="Valle G."/>
        </authorList>
    </citation>
    <scope>NUCLEOTIDE SEQUENCE [LARGE SCALE GENOMIC DNA]</scope>
    <source>
        <strain>ATCC BAA-1253 / SS9</strain>
    </source>
</reference>
<dbReference type="EC" id="2.1.1.174" evidence="1"/>
<dbReference type="EMBL" id="CR378665">
    <property type="protein sequence ID" value="CAG19232.1"/>
    <property type="molecule type" value="Genomic_DNA"/>
</dbReference>
<dbReference type="RefSeq" id="WP_011217570.1">
    <property type="nucleotide sequence ID" value="NC_006370.1"/>
</dbReference>
<dbReference type="SMR" id="Q6LTZ3"/>
<dbReference type="STRING" id="298386.PBPRA0819"/>
<dbReference type="KEGG" id="ppr:PBPRA0819"/>
<dbReference type="eggNOG" id="COG2813">
    <property type="taxonomic scope" value="Bacteria"/>
</dbReference>
<dbReference type="HOGENOM" id="CLU_040288_4_0_6"/>
<dbReference type="Proteomes" id="UP000000593">
    <property type="component" value="Chromosome 1"/>
</dbReference>
<dbReference type="GO" id="GO:0005737">
    <property type="term" value="C:cytoplasm"/>
    <property type="evidence" value="ECO:0007669"/>
    <property type="project" value="UniProtKB-SubCell"/>
</dbReference>
<dbReference type="GO" id="GO:0052916">
    <property type="term" value="F:23S rRNA (guanine(1835)-N(2))-methyltransferase activity"/>
    <property type="evidence" value="ECO:0007669"/>
    <property type="project" value="UniProtKB-EC"/>
</dbReference>
<dbReference type="GO" id="GO:0003676">
    <property type="term" value="F:nucleic acid binding"/>
    <property type="evidence" value="ECO:0007669"/>
    <property type="project" value="InterPro"/>
</dbReference>
<dbReference type="CDD" id="cd02440">
    <property type="entry name" value="AdoMet_MTases"/>
    <property type="match status" value="1"/>
</dbReference>
<dbReference type="Gene3D" id="3.40.50.150">
    <property type="entry name" value="Vaccinia Virus protein VP39"/>
    <property type="match status" value="2"/>
</dbReference>
<dbReference type="HAMAP" id="MF_01859">
    <property type="entry name" value="23SrRNA_methyltr_G"/>
    <property type="match status" value="1"/>
</dbReference>
<dbReference type="InterPro" id="IPR002052">
    <property type="entry name" value="DNA_methylase_N6_adenine_CS"/>
</dbReference>
<dbReference type="InterPro" id="IPR017237">
    <property type="entry name" value="rRNA_m2G-MeTrfase_RlmG"/>
</dbReference>
<dbReference type="InterPro" id="IPR046977">
    <property type="entry name" value="RsmC/RlmG"/>
</dbReference>
<dbReference type="InterPro" id="IPR029063">
    <property type="entry name" value="SAM-dependent_MTases_sf"/>
</dbReference>
<dbReference type="InterPro" id="IPR007848">
    <property type="entry name" value="Small_mtfrase_dom"/>
</dbReference>
<dbReference type="PANTHER" id="PTHR47816:SF5">
    <property type="entry name" value="RIBOSOMAL RNA LARGE SUBUNIT METHYLTRANSFERASE G"/>
    <property type="match status" value="1"/>
</dbReference>
<dbReference type="PANTHER" id="PTHR47816">
    <property type="entry name" value="RIBOSOMAL RNA SMALL SUBUNIT METHYLTRANSFERASE C"/>
    <property type="match status" value="1"/>
</dbReference>
<dbReference type="Pfam" id="PF05175">
    <property type="entry name" value="MTS"/>
    <property type="match status" value="1"/>
</dbReference>
<dbReference type="PIRSF" id="PIRSF037565">
    <property type="entry name" value="RRNA_m2G_Mtase_RsmD_prd"/>
    <property type="match status" value="1"/>
</dbReference>
<dbReference type="SUPFAM" id="SSF53335">
    <property type="entry name" value="S-adenosyl-L-methionine-dependent methyltransferases"/>
    <property type="match status" value="1"/>
</dbReference>
<proteinExistence type="inferred from homology"/>
<evidence type="ECO:0000255" key="1">
    <source>
        <dbReference type="HAMAP-Rule" id="MF_01859"/>
    </source>
</evidence>
<gene>
    <name evidence="1" type="primary">rlmG</name>
    <name type="ordered locus">PBPRA0819</name>
</gene>
<sequence>MKPALTLHDRTLKLNRFPIRKIETLQAWDAADEYLINHTHDMELDPQRPILILNDSFGALSCWFAERANVTTVTDSFVAKQGCIANLTANQLPSVNIIDCLAELPKNPQLVLIKLPKNNRLLTWQLQQLCHLLPEDCRVIGAAKVKDIHTSTLKLCDKYLGETKTSLAVKKARLVFIKPNASLAKPMPEAKAWDVPEHGIRLSNHANVFSGESLDIGARLLLNHIPQDFKYKDIIDLGCGNGVIGIKAARRNPQAKITCVDESFMAAASCTENAKQNLEAPEQLTAIVTDCLADIEHSSADLVLCNPPFHQQTTITDHIAWQMFCDAKQVLRPKGELIVIGNRQLGYDDKLKRLFGNVEIIAQNDKFIVYQSVK</sequence>
<comment type="function">
    <text evidence="1">Specifically methylates the guanine in position 1835 (m2G1835) of 23S rRNA.</text>
</comment>
<comment type="catalytic activity">
    <reaction evidence="1">
        <text>guanosine(1835) in 23S rRNA + S-adenosyl-L-methionine = N(2)-methylguanosine(1835) in 23S rRNA + S-adenosyl-L-homocysteine + H(+)</text>
        <dbReference type="Rhea" id="RHEA:42744"/>
        <dbReference type="Rhea" id="RHEA-COMP:10217"/>
        <dbReference type="Rhea" id="RHEA-COMP:10218"/>
        <dbReference type="ChEBI" id="CHEBI:15378"/>
        <dbReference type="ChEBI" id="CHEBI:57856"/>
        <dbReference type="ChEBI" id="CHEBI:59789"/>
        <dbReference type="ChEBI" id="CHEBI:74269"/>
        <dbReference type="ChEBI" id="CHEBI:74481"/>
        <dbReference type="EC" id="2.1.1.174"/>
    </reaction>
</comment>
<comment type="subcellular location">
    <subcellularLocation>
        <location evidence="1">Cytoplasm</location>
    </subcellularLocation>
</comment>
<comment type="similarity">
    <text evidence="1">Belongs to the methyltransferase superfamily. RlmG family.</text>
</comment>
<feature type="chain" id="PRO_0000366469" description="Ribosomal RNA large subunit methyltransferase G">
    <location>
        <begin position="1"/>
        <end position="374"/>
    </location>
</feature>
<organism>
    <name type="scientific">Photobacterium profundum (strain SS9)</name>
    <dbReference type="NCBI Taxonomy" id="298386"/>
    <lineage>
        <taxon>Bacteria</taxon>
        <taxon>Pseudomonadati</taxon>
        <taxon>Pseudomonadota</taxon>
        <taxon>Gammaproteobacteria</taxon>
        <taxon>Vibrionales</taxon>
        <taxon>Vibrionaceae</taxon>
        <taxon>Photobacterium</taxon>
    </lineage>
</organism>